<feature type="chain" id="PRO_0000269179" description="High mobility group protein B4">
    <location>
        <begin position="1"/>
        <end position="194"/>
    </location>
</feature>
<feature type="DNA-binding region" description="HMG box 1" evidence="2">
    <location>
        <begin position="9"/>
        <end position="79"/>
    </location>
</feature>
<feature type="DNA-binding region" description="HMG box 2" evidence="2">
    <location>
        <begin position="93"/>
        <end position="161"/>
    </location>
</feature>
<keyword id="KW-0158">Chromosome</keyword>
<keyword id="KW-0238">DNA-binding</keyword>
<keyword id="KW-0539">Nucleus</keyword>
<keyword id="KW-1185">Reference proteome</keyword>
<keyword id="KW-0677">Repeat</keyword>
<organism>
    <name type="scientific">Bos taurus</name>
    <name type="common">Bovine</name>
    <dbReference type="NCBI Taxonomy" id="9913"/>
    <lineage>
        <taxon>Eukaryota</taxon>
        <taxon>Metazoa</taxon>
        <taxon>Chordata</taxon>
        <taxon>Craniata</taxon>
        <taxon>Vertebrata</taxon>
        <taxon>Euteleostomi</taxon>
        <taxon>Mammalia</taxon>
        <taxon>Eutheria</taxon>
        <taxon>Laurasiatheria</taxon>
        <taxon>Artiodactyla</taxon>
        <taxon>Ruminantia</taxon>
        <taxon>Pecora</taxon>
        <taxon>Bovidae</taxon>
        <taxon>Bovinae</taxon>
        <taxon>Bos</taxon>
    </lineage>
</organism>
<accession>Q32L34</accession>
<reference key="1">
    <citation type="submission" date="2005-11" db="EMBL/GenBank/DDBJ databases">
        <authorList>
            <consortium name="NIH - Mammalian Gene Collection (MGC) project"/>
        </authorList>
    </citation>
    <scope>NUCLEOTIDE SEQUENCE [LARGE SCALE MRNA]</scope>
    <source>
        <strain>Crossbred X Angus</strain>
        <tissue>Liver</tissue>
    </source>
</reference>
<name>HMGB4_BOVIN</name>
<evidence type="ECO:0000250" key="1">
    <source>
        <dbReference type="UniProtKB" id="Q6P8W9"/>
    </source>
</evidence>
<evidence type="ECO:0000255" key="2">
    <source>
        <dbReference type="PROSITE-ProRule" id="PRU00267"/>
    </source>
</evidence>
<evidence type="ECO:0000305" key="3"/>
<sequence>MGKRDQLKPKANVSSYIHFLLNYRNKFKEQQPNTYLGFKEFSRKCSEKWRSISKHEKAKYEALAKLDKARYQEEMMNYFGRRKKRRKRDPHAPRRPPSSFLLFCQDHYAQLKSENPSWSVVQVAKASGKMWSAKTDVDKQPYEQRAALLRAKYREELSVYRNQFNARKTCLQESATNQCREFEQAESDTTDGSN</sequence>
<protein>
    <recommendedName>
        <fullName>High mobility group protein B4</fullName>
    </recommendedName>
</protein>
<dbReference type="EMBL" id="BC109790">
    <property type="protein sequence ID" value="AAI09791.1"/>
    <property type="molecule type" value="mRNA"/>
</dbReference>
<dbReference type="RefSeq" id="NP_001035652.1">
    <property type="nucleotide sequence ID" value="NM_001040562.3"/>
</dbReference>
<dbReference type="SMR" id="Q32L34"/>
<dbReference type="FunCoup" id="Q32L34">
    <property type="interactions" value="23"/>
</dbReference>
<dbReference type="STRING" id="9913.ENSBTAP00000000438"/>
<dbReference type="PaxDb" id="9913-ENSBTAP00000000438"/>
<dbReference type="Ensembl" id="ENSBTAT00000000438.5">
    <property type="protein sequence ID" value="ENSBTAP00000000438.4"/>
    <property type="gene ID" value="ENSBTAG00000000335.5"/>
</dbReference>
<dbReference type="GeneID" id="539195"/>
<dbReference type="KEGG" id="bta:539195"/>
<dbReference type="CTD" id="127540"/>
<dbReference type="VEuPathDB" id="HostDB:ENSBTAG00000000335"/>
<dbReference type="VGNC" id="VGNC:29876">
    <property type="gene designation" value="HMGB4"/>
</dbReference>
<dbReference type="eggNOG" id="KOG0381">
    <property type="taxonomic scope" value="Eukaryota"/>
</dbReference>
<dbReference type="GeneTree" id="ENSGT00940000162735"/>
<dbReference type="HOGENOM" id="CLU_082854_0_4_1"/>
<dbReference type="InParanoid" id="Q32L34"/>
<dbReference type="OMA" id="MWSAKTD"/>
<dbReference type="OrthoDB" id="1919336at2759"/>
<dbReference type="TreeFam" id="TF105371"/>
<dbReference type="Proteomes" id="UP000009136">
    <property type="component" value="Chromosome 3"/>
</dbReference>
<dbReference type="Bgee" id="ENSBTAG00000000335">
    <property type="expression patterns" value="Expressed in semen and 15 other cell types or tissues"/>
</dbReference>
<dbReference type="GO" id="GO:0005694">
    <property type="term" value="C:chromosome"/>
    <property type="evidence" value="ECO:0007669"/>
    <property type="project" value="UniProtKB-SubCell"/>
</dbReference>
<dbReference type="GO" id="GO:0005634">
    <property type="term" value="C:nucleus"/>
    <property type="evidence" value="ECO:0007669"/>
    <property type="project" value="UniProtKB-SubCell"/>
</dbReference>
<dbReference type="GO" id="GO:0008301">
    <property type="term" value="F:DNA binding, bending"/>
    <property type="evidence" value="ECO:0000318"/>
    <property type="project" value="GO_Central"/>
</dbReference>
<dbReference type="GO" id="GO:0006357">
    <property type="term" value="P:regulation of transcription by RNA polymerase II"/>
    <property type="evidence" value="ECO:0000318"/>
    <property type="project" value="GO_Central"/>
</dbReference>
<dbReference type="CDD" id="cd21978">
    <property type="entry name" value="HMG-box_HMGB_rpt1"/>
    <property type="match status" value="1"/>
</dbReference>
<dbReference type="CDD" id="cd21979">
    <property type="entry name" value="HMG-box_HMGB_rpt2"/>
    <property type="match status" value="1"/>
</dbReference>
<dbReference type="FunFam" id="1.10.30.10:FF:000038">
    <property type="entry name" value="High mobility group box 4"/>
    <property type="match status" value="1"/>
</dbReference>
<dbReference type="FunFam" id="1.10.30.10:FF:000046">
    <property type="entry name" value="High mobility group box 4"/>
    <property type="match status" value="1"/>
</dbReference>
<dbReference type="Gene3D" id="1.10.30.10">
    <property type="entry name" value="High mobility group box domain"/>
    <property type="match status" value="2"/>
</dbReference>
<dbReference type="InterPro" id="IPR009071">
    <property type="entry name" value="HMG_box_dom"/>
</dbReference>
<dbReference type="InterPro" id="IPR036910">
    <property type="entry name" value="HMG_box_dom_sf"/>
</dbReference>
<dbReference type="InterPro" id="IPR050342">
    <property type="entry name" value="HMGB"/>
</dbReference>
<dbReference type="PANTHER" id="PTHR48112:SF7">
    <property type="entry name" value="HIGH MOBILITY GROUP PROTEIN B4"/>
    <property type="match status" value="1"/>
</dbReference>
<dbReference type="PANTHER" id="PTHR48112">
    <property type="entry name" value="HIGH MOBILITY GROUP PROTEIN DSP1"/>
    <property type="match status" value="1"/>
</dbReference>
<dbReference type="Pfam" id="PF00505">
    <property type="entry name" value="HMG_box"/>
    <property type="match status" value="1"/>
</dbReference>
<dbReference type="Pfam" id="PF09011">
    <property type="entry name" value="HMG_box_2"/>
    <property type="match status" value="1"/>
</dbReference>
<dbReference type="PRINTS" id="PR00886">
    <property type="entry name" value="HIGHMOBLTY12"/>
</dbReference>
<dbReference type="SMART" id="SM00398">
    <property type="entry name" value="HMG"/>
    <property type="match status" value="2"/>
</dbReference>
<dbReference type="SUPFAM" id="SSF47095">
    <property type="entry name" value="HMG-box"/>
    <property type="match status" value="2"/>
</dbReference>
<dbReference type="PROSITE" id="PS50118">
    <property type="entry name" value="HMG_BOX_2"/>
    <property type="match status" value="2"/>
</dbReference>
<gene>
    <name type="primary">HMGB4</name>
</gene>
<comment type="subcellular location">
    <subcellularLocation>
        <location evidence="1">Nucleus</location>
    </subcellularLocation>
    <subcellularLocation>
        <location evidence="1">Chromosome</location>
    </subcellularLocation>
    <text evidence="1">Interacts specifically with the sex chromosomes.</text>
</comment>
<comment type="similarity">
    <text evidence="3">Belongs to the HMGB family.</text>
</comment>
<proteinExistence type="evidence at transcript level"/>